<evidence type="ECO:0000250" key="1"/>
<evidence type="ECO:0000255" key="2">
    <source>
        <dbReference type="HAMAP-Rule" id="MF_00047"/>
    </source>
</evidence>
<comment type="function">
    <text evidence="2">Cell wall formation.</text>
</comment>
<comment type="catalytic activity">
    <reaction evidence="2">
        <text>2 D-alanine + ATP = D-alanyl-D-alanine + ADP + phosphate + H(+)</text>
        <dbReference type="Rhea" id="RHEA:11224"/>
        <dbReference type="ChEBI" id="CHEBI:15378"/>
        <dbReference type="ChEBI" id="CHEBI:30616"/>
        <dbReference type="ChEBI" id="CHEBI:43474"/>
        <dbReference type="ChEBI" id="CHEBI:57416"/>
        <dbReference type="ChEBI" id="CHEBI:57822"/>
        <dbReference type="ChEBI" id="CHEBI:456216"/>
        <dbReference type="EC" id="6.3.2.4"/>
    </reaction>
</comment>
<comment type="cofactor">
    <cofactor evidence="1">
        <name>Mg(2+)</name>
        <dbReference type="ChEBI" id="CHEBI:18420"/>
    </cofactor>
    <cofactor evidence="1">
        <name>Mn(2+)</name>
        <dbReference type="ChEBI" id="CHEBI:29035"/>
    </cofactor>
    <text evidence="1">Binds 2 magnesium or manganese ions per subunit.</text>
</comment>
<comment type="pathway">
    <text evidence="2">Cell wall biogenesis; peptidoglycan biosynthesis.</text>
</comment>
<comment type="subcellular location">
    <subcellularLocation>
        <location evidence="2">Cytoplasm</location>
    </subcellularLocation>
</comment>
<comment type="similarity">
    <text evidence="2">Belongs to the D-alanine--D-alanine ligase family.</text>
</comment>
<keyword id="KW-0067">ATP-binding</keyword>
<keyword id="KW-0133">Cell shape</keyword>
<keyword id="KW-0961">Cell wall biogenesis/degradation</keyword>
<keyword id="KW-0963">Cytoplasm</keyword>
<keyword id="KW-0436">Ligase</keyword>
<keyword id="KW-0460">Magnesium</keyword>
<keyword id="KW-0464">Manganese</keyword>
<keyword id="KW-0479">Metal-binding</keyword>
<keyword id="KW-0547">Nucleotide-binding</keyword>
<keyword id="KW-0573">Peptidoglycan synthesis</keyword>
<keyword id="KW-1185">Reference proteome</keyword>
<accession>Q62GS9</accession>
<gene>
    <name evidence="2" type="primary">ddl</name>
    <name type="ordered locus">BMA2549</name>
</gene>
<protein>
    <recommendedName>
        <fullName evidence="2">D-alanine--D-alanine ligase</fullName>
        <ecNumber evidence="2">6.3.2.4</ecNumber>
    </recommendedName>
    <alternativeName>
        <fullName evidence="2">D-Ala-D-Ala ligase</fullName>
    </alternativeName>
    <alternativeName>
        <fullName evidence="2">D-alanylalanine synthetase</fullName>
    </alternativeName>
</protein>
<name>DDL_BURMA</name>
<reference key="1">
    <citation type="journal article" date="2004" name="Proc. Natl. Acad. Sci. U.S.A.">
        <title>Structural flexibility in the Burkholderia mallei genome.</title>
        <authorList>
            <person name="Nierman W.C."/>
            <person name="DeShazer D."/>
            <person name="Kim H.S."/>
            <person name="Tettelin H."/>
            <person name="Nelson K.E."/>
            <person name="Feldblyum T.V."/>
            <person name="Ulrich R.L."/>
            <person name="Ronning C.M."/>
            <person name="Brinkac L.M."/>
            <person name="Daugherty S.C."/>
            <person name="Davidsen T.D."/>
            <person name="DeBoy R.T."/>
            <person name="Dimitrov G."/>
            <person name="Dodson R.J."/>
            <person name="Durkin A.S."/>
            <person name="Gwinn M.L."/>
            <person name="Haft D.H."/>
            <person name="Khouri H.M."/>
            <person name="Kolonay J.F."/>
            <person name="Madupu R."/>
            <person name="Mohammoud Y."/>
            <person name="Nelson W.C."/>
            <person name="Radune D."/>
            <person name="Romero C.M."/>
            <person name="Sarria S."/>
            <person name="Selengut J."/>
            <person name="Shamblin C."/>
            <person name="Sullivan S.A."/>
            <person name="White O."/>
            <person name="Yu Y."/>
            <person name="Zafar N."/>
            <person name="Zhou L."/>
            <person name="Fraser C.M."/>
        </authorList>
    </citation>
    <scope>NUCLEOTIDE SEQUENCE [LARGE SCALE GENOMIC DNA]</scope>
    <source>
        <strain>ATCC 23344</strain>
    </source>
</reference>
<sequence>MSGIDPKRFGKVAVLLGGDSAEREVSLNSGRLVLQGLRDAGIDAHPFDPAQRPLAALKDEGFVRAFNALHGGYGENGQIQGALDFYGIRYTGSGVLGSALGLDKFRTKLVWQQTGIPTPPFETVMRGDDYAARAQDIVAKLGVPLFVKPASEGSSVAVEKVKSADALPAALEEAAKHDKIVIVEKSIEGGGEYTACIAADLDLPLIRIVPAGEFYDYHAKYIANDTQYLIPCGLDAAKEAEFKRIARRAFDVLGCTDWGRADFMLDAAGNPYFLEVNTAPGMTDHSLPPKAARAVGIGYSELVVKVLSLTLD</sequence>
<proteinExistence type="inferred from homology"/>
<dbReference type="EC" id="6.3.2.4" evidence="2"/>
<dbReference type="EMBL" id="CP000010">
    <property type="protein sequence ID" value="AAU50054.1"/>
    <property type="molecule type" value="Genomic_DNA"/>
</dbReference>
<dbReference type="RefSeq" id="WP_004194254.1">
    <property type="nucleotide sequence ID" value="NC_006348.1"/>
</dbReference>
<dbReference type="RefSeq" id="YP_104092.1">
    <property type="nucleotide sequence ID" value="NC_006348.1"/>
</dbReference>
<dbReference type="SMR" id="Q62GS9"/>
<dbReference type="KEGG" id="bma:BMA2549"/>
<dbReference type="PATRIC" id="fig|243160.12.peg.2626"/>
<dbReference type="eggNOG" id="COG1181">
    <property type="taxonomic scope" value="Bacteria"/>
</dbReference>
<dbReference type="HOGENOM" id="CLU_039268_1_2_4"/>
<dbReference type="UniPathway" id="UPA00219"/>
<dbReference type="Proteomes" id="UP000006693">
    <property type="component" value="Chromosome 1"/>
</dbReference>
<dbReference type="GO" id="GO:0005829">
    <property type="term" value="C:cytosol"/>
    <property type="evidence" value="ECO:0007669"/>
    <property type="project" value="TreeGrafter"/>
</dbReference>
<dbReference type="GO" id="GO:0005524">
    <property type="term" value="F:ATP binding"/>
    <property type="evidence" value="ECO:0007669"/>
    <property type="project" value="UniProtKB-KW"/>
</dbReference>
<dbReference type="GO" id="GO:0008716">
    <property type="term" value="F:D-alanine-D-alanine ligase activity"/>
    <property type="evidence" value="ECO:0007669"/>
    <property type="project" value="UniProtKB-UniRule"/>
</dbReference>
<dbReference type="GO" id="GO:0046872">
    <property type="term" value="F:metal ion binding"/>
    <property type="evidence" value="ECO:0007669"/>
    <property type="project" value="UniProtKB-KW"/>
</dbReference>
<dbReference type="GO" id="GO:0071555">
    <property type="term" value="P:cell wall organization"/>
    <property type="evidence" value="ECO:0007669"/>
    <property type="project" value="UniProtKB-KW"/>
</dbReference>
<dbReference type="GO" id="GO:0009252">
    <property type="term" value="P:peptidoglycan biosynthetic process"/>
    <property type="evidence" value="ECO:0007669"/>
    <property type="project" value="UniProtKB-UniRule"/>
</dbReference>
<dbReference type="GO" id="GO:0008360">
    <property type="term" value="P:regulation of cell shape"/>
    <property type="evidence" value="ECO:0007669"/>
    <property type="project" value="UniProtKB-KW"/>
</dbReference>
<dbReference type="FunFam" id="3.30.1490.20:FF:000007">
    <property type="entry name" value="D-alanine--D-alanine ligase"/>
    <property type="match status" value="1"/>
</dbReference>
<dbReference type="FunFam" id="3.30.470.20:FF:000008">
    <property type="entry name" value="D-alanine--D-alanine ligase"/>
    <property type="match status" value="1"/>
</dbReference>
<dbReference type="FunFam" id="3.40.50.20:FF:000013">
    <property type="entry name" value="D-alanine--D-alanine ligase"/>
    <property type="match status" value="1"/>
</dbReference>
<dbReference type="Gene3D" id="3.40.50.20">
    <property type="match status" value="1"/>
</dbReference>
<dbReference type="Gene3D" id="3.30.1490.20">
    <property type="entry name" value="ATP-grasp fold, A domain"/>
    <property type="match status" value="1"/>
</dbReference>
<dbReference type="Gene3D" id="3.30.470.20">
    <property type="entry name" value="ATP-grasp fold, B domain"/>
    <property type="match status" value="1"/>
</dbReference>
<dbReference type="HAMAP" id="MF_00047">
    <property type="entry name" value="Dala_Dala_lig"/>
    <property type="match status" value="1"/>
</dbReference>
<dbReference type="InterPro" id="IPR011761">
    <property type="entry name" value="ATP-grasp"/>
</dbReference>
<dbReference type="InterPro" id="IPR013815">
    <property type="entry name" value="ATP_grasp_subdomain_1"/>
</dbReference>
<dbReference type="InterPro" id="IPR000291">
    <property type="entry name" value="D-Ala_lig_Van_CS"/>
</dbReference>
<dbReference type="InterPro" id="IPR005905">
    <property type="entry name" value="D_ala_D_ala"/>
</dbReference>
<dbReference type="InterPro" id="IPR011095">
    <property type="entry name" value="Dala_Dala_lig_C"/>
</dbReference>
<dbReference type="InterPro" id="IPR011127">
    <property type="entry name" value="Dala_Dala_lig_N"/>
</dbReference>
<dbReference type="InterPro" id="IPR016185">
    <property type="entry name" value="PreATP-grasp_dom_sf"/>
</dbReference>
<dbReference type="NCBIfam" id="TIGR01205">
    <property type="entry name" value="D_ala_D_alaTIGR"/>
    <property type="match status" value="1"/>
</dbReference>
<dbReference type="NCBIfam" id="NF002378">
    <property type="entry name" value="PRK01372.1"/>
    <property type="match status" value="1"/>
</dbReference>
<dbReference type="PANTHER" id="PTHR23132">
    <property type="entry name" value="D-ALANINE--D-ALANINE LIGASE"/>
    <property type="match status" value="1"/>
</dbReference>
<dbReference type="PANTHER" id="PTHR23132:SF23">
    <property type="entry name" value="D-ALANINE--D-ALANINE LIGASE B"/>
    <property type="match status" value="1"/>
</dbReference>
<dbReference type="Pfam" id="PF07478">
    <property type="entry name" value="Dala_Dala_lig_C"/>
    <property type="match status" value="1"/>
</dbReference>
<dbReference type="Pfam" id="PF01820">
    <property type="entry name" value="Dala_Dala_lig_N"/>
    <property type="match status" value="1"/>
</dbReference>
<dbReference type="PIRSF" id="PIRSF039102">
    <property type="entry name" value="Ddl/VanB"/>
    <property type="match status" value="1"/>
</dbReference>
<dbReference type="SUPFAM" id="SSF56059">
    <property type="entry name" value="Glutathione synthetase ATP-binding domain-like"/>
    <property type="match status" value="1"/>
</dbReference>
<dbReference type="SUPFAM" id="SSF52440">
    <property type="entry name" value="PreATP-grasp domain"/>
    <property type="match status" value="1"/>
</dbReference>
<dbReference type="PROSITE" id="PS50975">
    <property type="entry name" value="ATP_GRASP"/>
    <property type="match status" value="1"/>
</dbReference>
<dbReference type="PROSITE" id="PS00843">
    <property type="entry name" value="DALA_DALA_LIGASE_1"/>
    <property type="match status" value="1"/>
</dbReference>
<dbReference type="PROSITE" id="PS00844">
    <property type="entry name" value="DALA_DALA_LIGASE_2"/>
    <property type="match status" value="1"/>
</dbReference>
<organism>
    <name type="scientific">Burkholderia mallei (strain ATCC 23344)</name>
    <dbReference type="NCBI Taxonomy" id="243160"/>
    <lineage>
        <taxon>Bacteria</taxon>
        <taxon>Pseudomonadati</taxon>
        <taxon>Pseudomonadota</taxon>
        <taxon>Betaproteobacteria</taxon>
        <taxon>Burkholderiales</taxon>
        <taxon>Burkholderiaceae</taxon>
        <taxon>Burkholderia</taxon>
        <taxon>pseudomallei group</taxon>
    </lineage>
</organism>
<feature type="chain" id="PRO_0000341070" description="D-alanine--D-alanine ligase">
    <location>
        <begin position="1"/>
        <end position="312"/>
    </location>
</feature>
<feature type="domain" description="ATP-grasp" evidence="2">
    <location>
        <begin position="108"/>
        <end position="308"/>
    </location>
</feature>
<feature type="binding site" evidence="2">
    <location>
        <begin position="138"/>
        <end position="193"/>
    </location>
    <ligand>
        <name>ATP</name>
        <dbReference type="ChEBI" id="CHEBI:30616"/>
    </ligand>
</feature>
<feature type="binding site" evidence="2">
    <location>
        <position position="262"/>
    </location>
    <ligand>
        <name>Mg(2+)</name>
        <dbReference type="ChEBI" id="CHEBI:18420"/>
        <label>1</label>
    </ligand>
</feature>
<feature type="binding site" evidence="2">
    <location>
        <position position="275"/>
    </location>
    <ligand>
        <name>Mg(2+)</name>
        <dbReference type="ChEBI" id="CHEBI:18420"/>
        <label>1</label>
    </ligand>
</feature>
<feature type="binding site" evidence="2">
    <location>
        <position position="275"/>
    </location>
    <ligand>
        <name>Mg(2+)</name>
        <dbReference type="ChEBI" id="CHEBI:18420"/>
        <label>2</label>
    </ligand>
</feature>
<feature type="binding site" evidence="2">
    <location>
        <position position="277"/>
    </location>
    <ligand>
        <name>Mg(2+)</name>
        <dbReference type="ChEBI" id="CHEBI:18420"/>
        <label>2</label>
    </ligand>
</feature>